<reference key="1">
    <citation type="submission" date="2007-11" db="EMBL/GenBank/DDBJ databases">
        <title>The genome sequence of the hyperthermophilic bacterium Thermotoga neapolitana.</title>
        <authorList>
            <person name="Lim S.K."/>
            <person name="Kim J.S."/>
            <person name="Cha S.H."/>
            <person name="Park B.C."/>
            <person name="Lee D.S."/>
            <person name="Tae H.S."/>
            <person name="Kim S.-J."/>
            <person name="Kim J.J."/>
            <person name="Park K.J."/>
            <person name="Lee S.Y."/>
        </authorList>
    </citation>
    <scope>NUCLEOTIDE SEQUENCE [LARGE SCALE GENOMIC DNA]</scope>
    <source>
        <strain>ATCC 49049 / DSM 4359 / NBRC 107923 / NS-E</strain>
    </source>
</reference>
<dbReference type="EC" id="2.7.1.23" evidence="1"/>
<dbReference type="EMBL" id="CP000916">
    <property type="protein sequence ID" value="ACM23107.1"/>
    <property type="molecule type" value="Genomic_DNA"/>
</dbReference>
<dbReference type="RefSeq" id="WP_015919424.1">
    <property type="nucleotide sequence ID" value="NC_011978.1"/>
</dbReference>
<dbReference type="SMR" id="B9K824"/>
<dbReference type="STRING" id="309803.CTN_0931"/>
<dbReference type="KEGG" id="tna:CTN_0931"/>
<dbReference type="eggNOG" id="COG0061">
    <property type="taxonomic scope" value="Bacteria"/>
</dbReference>
<dbReference type="HOGENOM" id="CLU_008831_0_3_0"/>
<dbReference type="Proteomes" id="UP000000445">
    <property type="component" value="Chromosome"/>
</dbReference>
<dbReference type="GO" id="GO:0005737">
    <property type="term" value="C:cytoplasm"/>
    <property type="evidence" value="ECO:0007669"/>
    <property type="project" value="UniProtKB-SubCell"/>
</dbReference>
<dbReference type="GO" id="GO:0005524">
    <property type="term" value="F:ATP binding"/>
    <property type="evidence" value="ECO:0007669"/>
    <property type="project" value="UniProtKB-KW"/>
</dbReference>
<dbReference type="GO" id="GO:0046872">
    <property type="term" value="F:metal ion binding"/>
    <property type="evidence" value="ECO:0007669"/>
    <property type="project" value="UniProtKB-UniRule"/>
</dbReference>
<dbReference type="GO" id="GO:0051287">
    <property type="term" value="F:NAD binding"/>
    <property type="evidence" value="ECO:0007669"/>
    <property type="project" value="UniProtKB-ARBA"/>
</dbReference>
<dbReference type="GO" id="GO:0003951">
    <property type="term" value="F:NAD+ kinase activity"/>
    <property type="evidence" value="ECO:0007669"/>
    <property type="project" value="UniProtKB-UniRule"/>
</dbReference>
<dbReference type="GO" id="GO:0019674">
    <property type="term" value="P:NAD metabolic process"/>
    <property type="evidence" value="ECO:0007669"/>
    <property type="project" value="InterPro"/>
</dbReference>
<dbReference type="GO" id="GO:0006741">
    <property type="term" value="P:NADP biosynthetic process"/>
    <property type="evidence" value="ECO:0007669"/>
    <property type="project" value="UniProtKB-UniRule"/>
</dbReference>
<dbReference type="Gene3D" id="3.40.50.10330">
    <property type="entry name" value="Probable inorganic polyphosphate/atp-NAD kinase, domain 1"/>
    <property type="match status" value="1"/>
</dbReference>
<dbReference type="Gene3D" id="2.60.200.30">
    <property type="entry name" value="Probable inorganic polyphosphate/atp-NAD kinase, domain 2"/>
    <property type="match status" value="1"/>
</dbReference>
<dbReference type="HAMAP" id="MF_00361">
    <property type="entry name" value="NAD_kinase"/>
    <property type="match status" value="1"/>
</dbReference>
<dbReference type="InterPro" id="IPR017438">
    <property type="entry name" value="ATP-NAD_kinase_N"/>
</dbReference>
<dbReference type="InterPro" id="IPR017437">
    <property type="entry name" value="ATP-NAD_kinase_PpnK-typ_C"/>
</dbReference>
<dbReference type="InterPro" id="IPR016064">
    <property type="entry name" value="NAD/diacylglycerol_kinase_sf"/>
</dbReference>
<dbReference type="InterPro" id="IPR002504">
    <property type="entry name" value="NADK"/>
</dbReference>
<dbReference type="NCBIfam" id="NF010677">
    <property type="entry name" value="PRK14075.1"/>
    <property type="match status" value="1"/>
</dbReference>
<dbReference type="PANTHER" id="PTHR20275">
    <property type="entry name" value="NAD KINASE"/>
    <property type="match status" value="1"/>
</dbReference>
<dbReference type="PANTHER" id="PTHR20275:SF0">
    <property type="entry name" value="NAD KINASE"/>
    <property type="match status" value="1"/>
</dbReference>
<dbReference type="Pfam" id="PF01513">
    <property type="entry name" value="NAD_kinase"/>
    <property type="match status" value="1"/>
</dbReference>
<dbReference type="Pfam" id="PF20143">
    <property type="entry name" value="NAD_kinase_C"/>
    <property type="match status" value="1"/>
</dbReference>
<dbReference type="SUPFAM" id="SSF111331">
    <property type="entry name" value="NAD kinase/diacylglycerol kinase-like"/>
    <property type="match status" value="1"/>
</dbReference>
<protein>
    <recommendedName>
        <fullName evidence="1">NAD kinase</fullName>
        <ecNumber evidence="1">2.7.1.23</ecNumber>
    </recommendedName>
    <alternativeName>
        <fullName evidence="1">ATP-dependent NAD kinase</fullName>
    </alternativeName>
</protein>
<gene>
    <name evidence="1" type="primary">nadK</name>
    <name type="ordered locus">CTN_0931</name>
</gene>
<evidence type="ECO:0000255" key="1">
    <source>
        <dbReference type="HAMAP-Rule" id="MF_00361"/>
    </source>
</evidence>
<name>NADK_THENN</name>
<feature type="chain" id="PRO_1000192527" description="NAD kinase">
    <location>
        <begin position="1"/>
        <end position="258"/>
    </location>
</feature>
<feature type="active site" description="Proton acceptor" evidence="1">
    <location>
        <position position="51"/>
    </location>
</feature>
<feature type="binding site" evidence="1">
    <location>
        <begin position="51"/>
        <end position="52"/>
    </location>
    <ligand>
        <name>NAD(+)</name>
        <dbReference type="ChEBI" id="CHEBI:57540"/>
    </ligand>
</feature>
<feature type="binding site" evidence="1">
    <location>
        <position position="56"/>
    </location>
    <ligand>
        <name>NAD(+)</name>
        <dbReference type="ChEBI" id="CHEBI:57540"/>
    </ligand>
</feature>
<feature type="binding site" evidence="1">
    <location>
        <begin position="119"/>
        <end position="120"/>
    </location>
    <ligand>
        <name>NAD(+)</name>
        <dbReference type="ChEBI" id="CHEBI:57540"/>
    </ligand>
</feature>
<feature type="binding site" evidence="1">
    <location>
        <position position="130"/>
    </location>
    <ligand>
        <name>NAD(+)</name>
        <dbReference type="ChEBI" id="CHEBI:57540"/>
    </ligand>
</feature>
<feature type="binding site" evidence="1">
    <location>
        <position position="149"/>
    </location>
    <ligand>
        <name>NAD(+)</name>
        <dbReference type="ChEBI" id="CHEBI:57540"/>
    </ligand>
</feature>
<feature type="binding site" evidence="1">
    <location>
        <begin position="160"/>
        <end position="165"/>
    </location>
    <ligand>
        <name>NAD(+)</name>
        <dbReference type="ChEBI" id="CHEBI:57540"/>
    </ligand>
</feature>
<feature type="binding site" evidence="1">
    <location>
        <position position="184"/>
    </location>
    <ligand>
        <name>NAD(+)</name>
        <dbReference type="ChEBI" id="CHEBI:57540"/>
    </ligand>
</feature>
<sequence length="258" mass="28920">MKIAILYREEKEKEGVLLKEKLSREHEVVSFHEASASNVVDADLIVVVGGDGTMLRAARKAADGTPLVGFKAGRLGFLTSYTLEEVDQFLEDLRKGNFREELRWFIRVESDIGSHLALNDATLERDLSGKMVEIEVNVEHHSSMWFFADGVVVASPTGSTAYSLSIGGPIIFPECEVLEISPIAPQFFLTRSVVIPSSFKVTVECQREINLLIDGTMVGKTRRVIVQKAEKYVKILRPIKYDYVAVIREKLGYGRRIE</sequence>
<proteinExistence type="inferred from homology"/>
<accession>B9K824</accession>
<keyword id="KW-0067">ATP-binding</keyword>
<keyword id="KW-0963">Cytoplasm</keyword>
<keyword id="KW-0418">Kinase</keyword>
<keyword id="KW-0520">NAD</keyword>
<keyword id="KW-0521">NADP</keyword>
<keyword id="KW-0547">Nucleotide-binding</keyword>
<keyword id="KW-0808">Transferase</keyword>
<organism>
    <name type="scientific">Thermotoga neapolitana (strain ATCC 49049 / DSM 4359 / NBRC 107923 / NS-E)</name>
    <dbReference type="NCBI Taxonomy" id="309803"/>
    <lineage>
        <taxon>Bacteria</taxon>
        <taxon>Thermotogati</taxon>
        <taxon>Thermotogota</taxon>
        <taxon>Thermotogae</taxon>
        <taxon>Thermotogales</taxon>
        <taxon>Thermotogaceae</taxon>
        <taxon>Thermotoga</taxon>
    </lineage>
</organism>
<comment type="function">
    <text evidence="1">Involved in the regulation of the intracellular balance of NAD and NADP, and is a key enzyme in the biosynthesis of NADP. Catalyzes specifically the phosphorylation on 2'-hydroxyl of the adenosine moiety of NAD to yield NADP.</text>
</comment>
<comment type="catalytic activity">
    <reaction evidence="1">
        <text>NAD(+) + ATP = ADP + NADP(+) + H(+)</text>
        <dbReference type="Rhea" id="RHEA:18629"/>
        <dbReference type="ChEBI" id="CHEBI:15378"/>
        <dbReference type="ChEBI" id="CHEBI:30616"/>
        <dbReference type="ChEBI" id="CHEBI:57540"/>
        <dbReference type="ChEBI" id="CHEBI:58349"/>
        <dbReference type="ChEBI" id="CHEBI:456216"/>
        <dbReference type="EC" id="2.7.1.23"/>
    </reaction>
</comment>
<comment type="cofactor">
    <cofactor evidence="1">
        <name>a divalent metal cation</name>
        <dbReference type="ChEBI" id="CHEBI:60240"/>
    </cofactor>
</comment>
<comment type="subcellular location">
    <subcellularLocation>
        <location evidence="1">Cytoplasm</location>
    </subcellularLocation>
</comment>
<comment type="similarity">
    <text evidence="1">Belongs to the NAD kinase family.</text>
</comment>